<gene>
    <name evidence="1" type="primary">psbN</name>
    <name type="ordered locus">Syncc9902_2082</name>
</gene>
<accession>Q3AUQ9</accession>
<evidence type="ECO:0000255" key="1">
    <source>
        <dbReference type="HAMAP-Rule" id="MF_00293"/>
    </source>
</evidence>
<protein>
    <recommendedName>
        <fullName evidence="1">Protein PsbN</fullName>
    </recommendedName>
</protein>
<name>PSBN_SYNS9</name>
<sequence>METSSPALSVALGVMAVVLGLTGFGVYQAFGPPSKELDDPFDDHED</sequence>
<feature type="chain" id="PRO_0000232789" description="Protein PsbN">
    <location>
        <begin position="1"/>
        <end position="46"/>
    </location>
</feature>
<feature type="transmembrane region" description="Helical" evidence="1">
    <location>
        <begin position="7"/>
        <end position="27"/>
    </location>
</feature>
<comment type="function">
    <text evidence="1">May play a role in photosystem I and II biogenesis.</text>
</comment>
<comment type="subcellular location">
    <subcellularLocation>
        <location evidence="1">Cellular thylakoid membrane</location>
        <topology evidence="1">Single-pass membrane protein</topology>
    </subcellularLocation>
</comment>
<comment type="similarity">
    <text evidence="1">Belongs to the PsbN family.</text>
</comment>
<comment type="caution">
    <text evidence="1">Originally thought to be a component of PSII; based on experiments in Synechocystis, N.tabacum and barley, and its absence from PSII in T.elongatus and T.vulcanus, this is probably not true.</text>
</comment>
<dbReference type="EMBL" id="CP000097">
    <property type="protein sequence ID" value="ABB27040.1"/>
    <property type="molecule type" value="Genomic_DNA"/>
</dbReference>
<dbReference type="RefSeq" id="WP_011360825.1">
    <property type="nucleotide sequence ID" value="NC_007513.1"/>
</dbReference>
<dbReference type="SMR" id="Q3AUQ9"/>
<dbReference type="STRING" id="316279.Syncc9902_2082"/>
<dbReference type="KEGG" id="sye:Syncc9902_2082"/>
<dbReference type="eggNOG" id="ENOG50339MH">
    <property type="taxonomic scope" value="Bacteria"/>
</dbReference>
<dbReference type="HOGENOM" id="CLU_205504_1_0_3"/>
<dbReference type="Proteomes" id="UP000002712">
    <property type="component" value="Chromosome"/>
</dbReference>
<dbReference type="GO" id="GO:0031676">
    <property type="term" value="C:plasma membrane-derived thylakoid membrane"/>
    <property type="evidence" value="ECO:0007669"/>
    <property type="project" value="UniProtKB-SubCell"/>
</dbReference>
<dbReference type="GO" id="GO:0015979">
    <property type="term" value="P:photosynthesis"/>
    <property type="evidence" value="ECO:0007669"/>
    <property type="project" value="InterPro"/>
</dbReference>
<dbReference type="HAMAP" id="MF_00293">
    <property type="entry name" value="PSII_PsbN"/>
    <property type="match status" value="1"/>
</dbReference>
<dbReference type="InterPro" id="IPR003398">
    <property type="entry name" value="PSII_PsbN"/>
</dbReference>
<dbReference type="NCBIfam" id="NF009650">
    <property type="entry name" value="PRK13183.1"/>
    <property type="match status" value="1"/>
</dbReference>
<dbReference type="Pfam" id="PF02468">
    <property type="entry name" value="PsbN"/>
    <property type="match status" value="1"/>
</dbReference>
<proteinExistence type="inferred from homology"/>
<reference key="1">
    <citation type="submission" date="2005-08" db="EMBL/GenBank/DDBJ databases">
        <title>Complete sequence of Synechococcus sp. CC9902.</title>
        <authorList>
            <person name="Copeland A."/>
            <person name="Lucas S."/>
            <person name="Lapidus A."/>
            <person name="Barry K."/>
            <person name="Detter J.C."/>
            <person name="Glavina T."/>
            <person name="Hammon N."/>
            <person name="Israni S."/>
            <person name="Pitluck S."/>
            <person name="Martinez M."/>
            <person name="Schmutz J."/>
            <person name="Larimer F."/>
            <person name="Land M."/>
            <person name="Kyrpides N."/>
            <person name="Ivanova N."/>
            <person name="Richardson P."/>
        </authorList>
    </citation>
    <scope>NUCLEOTIDE SEQUENCE [LARGE SCALE GENOMIC DNA]</scope>
    <source>
        <strain>CC9902</strain>
    </source>
</reference>
<organism>
    <name type="scientific">Synechococcus sp. (strain CC9902)</name>
    <dbReference type="NCBI Taxonomy" id="316279"/>
    <lineage>
        <taxon>Bacteria</taxon>
        <taxon>Bacillati</taxon>
        <taxon>Cyanobacteriota</taxon>
        <taxon>Cyanophyceae</taxon>
        <taxon>Synechococcales</taxon>
        <taxon>Synechococcaceae</taxon>
        <taxon>Synechococcus</taxon>
    </lineage>
</organism>
<keyword id="KW-0472">Membrane</keyword>
<keyword id="KW-1185">Reference proteome</keyword>
<keyword id="KW-0793">Thylakoid</keyword>
<keyword id="KW-0812">Transmembrane</keyword>
<keyword id="KW-1133">Transmembrane helix</keyword>